<keyword id="KW-0328">Glycosyltransferase</keyword>
<keyword id="KW-0808">Transferase</keyword>
<name>UFOG6_FRAAN</name>
<proteinExistence type="evidence at protein level"/>
<protein>
    <recommendedName>
        <fullName evidence="6">UDP-glucose flavonoid 3-O-glucosyltransferase 6</fullName>
        <ecNumber evidence="5">2.4.1.91</ecNumber>
    </recommendedName>
    <alternativeName>
        <fullName evidence="6">Flavonol 3-O-glucosyltransferase 6</fullName>
        <shortName evidence="6">FaGT6</shortName>
    </alternativeName>
</protein>
<feature type="chain" id="PRO_0000413769" description="UDP-glucose flavonoid 3-O-glucosyltransferase 6">
    <location>
        <begin position="1"/>
        <end position="479"/>
    </location>
</feature>
<feature type="region of interest" description="Disordered" evidence="4">
    <location>
        <begin position="454"/>
        <end position="479"/>
    </location>
</feature>
<feature type="active site" description="Proton acceptor" evidence="1">
    <location>
        <position position="17"/>
    </location>
</feature>
<feature type="active site" description="Charge relay" evidence="1">
    <location>
        <position position="121"/>
    </location>
</feature>
<feature type="binding site" evidence="2">
    <location>
        <position position="17"/>
    </location>
    <ligand>
        <name>an anthocyanidin</name>
        <dbReference type="ChEBI" id="CHEBI:143576"/>
    </ligand>
</feature>
<feature type="binding site" evidence="1">
    <location>
        <position position="143"/>
    </location>
    <ligand>
        <name>UDP-alpha-D-glucose</name>
        <dbReference type="ChEBI" id="CHEBI:58885"/>
    </ligand>
</feature>
<feature type="binding site" evidence="1">
    <location>
        <position position="354"/>
    </location>
    <ligand>
        <name>UDP-alpha-D-glucose</name>
        <dbReference type="ChEBI" id="CHEBI:58885"/>
    </ligand>
</feature>
<feature type="binding site" evidence="1">
    <location>
        <position position="356"/>
    </location>
    <ligand>
        <name>UDP-alpha-D-glucose</name>
        <dbReference type="ChEBI" id="CHEBI:58885"/>
    </ligand>
</feature>
<feature type="binding site" evidence="1">
    <location>
        <position position="371"/>
    </location>
    <ligand>
        <name>UDP-alpha-D-glucose</name>
        <dbReference type="ChEBI" id="CHEBI:58885"/>
    </ligand>
</feature>
<feature type="binding site" evidence="1">
    <location>
        <position position="374"/>
    </location>
    <ligand>
        <name>UDP-alpha-D-glucose</name>
        <dbReference type="ChEBI" id="CHEBI:58885"/>
    </ligand>
</feature>
<feature type="binding site" evidence="1">
    <location>
        <position position="375"/>
    </location>
    <ligand>
        <name>UDP-alpha-D-glucose</name>
        <dbReference type="ChEBI" id="CHEBI:58885"/>
    </ligand>
</feature>
<feature type="binding site" evidence="1">
    <location>
        <position position="376"/>
    </location>
    <ligand>
        <name>UDP-alpha-D-glucose</name>
        <dbReference type="ChEBI" id="CHEBI:58885"/>
    </ligand>
</feature>
<feature type="binding site" evidence="1">
    <location>
        <position position="379"/>
    </location>
    <ligand>
        <name>UDP-alpha-D-glucose</name>
        <dbReference type="ChEBI" id="CHEBI:58885"/>
    </ligand>
</feature>
<feature type="binding site" evidence="2">
    <location>
        <position position="394"/>
    </location>
    <ligand>
        <name>an anthocyanidin</name>
        <dbReference type="ChEBI" id="CHEBI:143576"/>
    </ligand>
</feature>
<feature type="binding site" evidence="1">
    <location>
        <position position="395"/>
    </location>
    <ligand>
        <name>UDP-alpha-D-glucose</name>
        <dbReference type="ChEBI" id="CHEBI:58885"/>
    </ligand>
</feature>
<feature type="binding site" evidence="1">
    <location>
        <position position="396"/>
    </location>
    <ligand>
        <name>UDP-alpha-D-glucose</name>
        <dbReference type="ChEBI" id="CHEBI:58885"/>
    </ligand>
</feature>
<gene>
    <name evidence="8" type="primary">GT6</name>
</gene>
<evidence type="ECO:0000250" key="1">
    <source>
        <dbReference type="UniProtKB" id="A0A0A1HA03"/>
    </source>
</evidence>
<evidence type="ECO:0000250" key="2">
    <source>
        <dbReference type="UniProtKB" id="P51094"/>
    </source>
</evidence>
<evidence type="ECO:0000255" key="3"/>
<evidence type="ECO:0000256" key="4">
    <source>
        <dbReference type="SAM" id="MobiDB-lite"/>
    </source>
</evidence>
<evidence type="ECO:0000269" key="5">
    <source>
    </source>
</evidence>
<evidence type="ECO:0000303" key="6">
    <source>
    </source>
</evidence>
<evidence type="ECO:0000305" key="7"/>
<evidence type="ECO:0000312" key="8">
    <source>
        <dbReference type="EMBL" id="ABB92748.1"/>
    </source>
</evidence>
<comment type="function">
    <text evidence="5">Broad spectrum multifunctional glucosyltransferase. Catalyzes the formation of flavonol 3-O-glucosides during fruit ripening. Accepted substrates include several flavonoids, hydroxycoumarins and beta-naphthols. Uses UDP-Glc as a sugar donor, but not UDP-Gal or UDP-GlcUA. May also be involved in detoxification of xenobiotics.</text>
</comment>
<comment type="catalytic activity">
    <reaction evidence="5">
        <text>a flavonol + UDP-alpha-D-glucose = a flavonol 3-O-beta-D-glucoside + UDP + H(+)</text>
        <dbReference type="Rhea" id="RHEA:22300"/>
        <dbReference type="ChEBI" id="CHEBI:15378"/>
        <dbReference type="ChEBI" id="CHEBI:16816"/>
        <dbReference type="ChEBI" id="CHEBI:28802"/>
        <dbReference type="ChEBI" id="CHEBI:58223"/>
        <dbReference type="ChEBI" id="CHEBI:58885"/>
        <dbReference type="EC" id="2.4.1.91"/>
    </reaction>
</comment>
<comment type="biophysicochemical properties">
    <kinetics>
        <KM evidence="5">5.3 uM for 3-hydroxyflavone</KM>
        <KM evidence="5">2 mM for UDP-glucose</KM>
        <Vmax evidence="5">1.4 nmol/sec/mg enzyme with 3-hydroxyflavone as substrate</Vmax>
        <Vmax evidence="5">0.5 nmol/sec/mg enzyme with UDP-glucose as substrate</Vmax>
        <text evidence="5">The kinetic constants are determined for the recombinant GST-fusion protein.</text>
    </kinetics>
    <phDependence>
        <text evidence="5">Optimum pH is 7.5-8.</text>
    </phDependence>
    <temperatureDependence>
        <text evidence="5">Optimum temperature is 35 degrees Celsius.</text>
    </temperatureDependence>
</comment>
<comment type="tissue specificity">
    <text evidence="5">Strongly expressed in achenes, with lower expression levels detected in receptacles.</text>
</comment>
<comment type="developmental stage">
    <text evidence="5">The expression in receptacles is ripening-related, with highest expression detected in red fruit.</text>
</comment>
<comment type="induction">
    <text evidence="5">By de-achening. By injection with salicylic acid, with transcript levels increasing by a factor of 5-6 at 4 hours post-injection, remaining stable until 6 hours post-injection and falling below control levels at 8 hours post-injection. Down-regulated by synthetic auxin naphthaleneacetic acid (NAA).</text>
</comment>
<comment type="similarity">
    <text evidence="3">Belongs to the UDP-glycosyltransferase family.</text>
</comment>
<sequence>MKKASELIFIPIPGIGHIVSTVEIAKLLLCRDDNLFITILIMKFPFTADGSDVYIKSLAVDPSLKTQRIRFVNLPQEHFQGTGATGFFTFIDSHKSHVKDAVTRLMETKSETTRIAGFVIDMFCTGMIDLANEFGLPSYVFYTSGAADLGLMFHLQALRDEENKDCTEFKDSDAELVVSSFVNPLPAARVLPSVVFEKEGGNFFLNFAKRYRETKGILVNTFLELEPHAIQSLSSDGKILPVYPVGPILNVKSEGNQVSSEKSKQKSDILEWLDDQPPSSVVFLCFGSMGCFGEDQVKEIAHALEQGGIRFLWSLRQPSKEKIGFPSDYTDYKAVLPEGFLDRTTDLGKVIGWAPQLAILAHPAVGGFVSHCGWNSTLESIWYGVPIATWPFYAEQQVNAFELVKELKLAVEIDMGYRKDSGVIVSRENIEKGIKEVMEQESELRKRVKEMSQMSRKALEEDGSSYSSLGRFLDQIQTS</sequence>
<dbReference type="EC" id="2.4.1.91" evidence="5"/>
<dbReference type="EMBL" id="DQ289587">
    <property type="protein sequence ID" value="ABB92748.1"/>
    <property type="molecule type" value="mRNA"/>
</dbReference>
<dbReference type="SMR" id="Q2V6K0"/>
<dbReference type="CAZy" id="GT1">
    <property type="family name" value="Glycosyltransferase Family 1"/>
</dbReference>
<dbReference type="BioCyc" id="MetaCyc:MONOMER-17433"/>
<dbReference type="GO" id="GO:0047893">
    <property type="term" value="F:flavonol 3-O-glucosyltransferase activity"/>
    <property type="evidence" value="ECO:0007669"/>
    <property type="project" value="UniProtKB-EC"/>
</dbReference>
<dbReference type="CDD" id="cd03784">
    <property type="entry name" value="GT1_Gtf-like"/>
    <property type="match status" value="1"/>
</dbReference>
<dbReference type="FunFam" id="3.40.50.2000:FF:000056">
    <property type="entry name" value="Glycosyltransferase"/>
    <property type="match status" value="1"/>
</dbReference>
<dbReference type="FunFam" id="3.40.50.2000:FF:000080">
    <property type="entry name" value="Glycosyltransferase"/>
    <property type="match status" value="1"/>
</dbReference>
<dbReference type="Gene3D" id="3.40.50.2000">
    <property type="entry name" value="Glycogen Phosphorylase B"/>
    <property type="match status" value="2"/>
</dbReference>
<dbReference type="InterPro" id="IPR050481">
    <property type="entry name" value="UDP-glycosyltransf_plant"/>
</dbReference>
<dbReference type="InterPro" id="IPR002213">
    <property type="entry name" value="UDP_glucos_trans"/>
</dbReference>
<dbReference type="InterPro" id="IPR035595">
    <property type="entry name" value="UDP_glycos_trans_CS"/>
</dbReference>
<dbReference type="PANTHER" id="PTHR48048">
    <property type="entry name" value="GLYCOSYLTRANSFERASE"/>
    <property type="match status" value="1"/>
</dbReference>
<dbReference type="PANTHER" id="PTHR48048:SF88">
    <property type="entry name" value="GLYCOSYLTRANSFERASE"/>
    <property type="match status" value="1"/>
</dbReference>
<dbReference type="Pfam" id="PF00201">
    <property type="entry name" value="UDPGT"/>
    <property type="match status" value="1"/>
</dbReference>
<dbReference type="SUPFAM" id="SSF53756">
    <property type="entry name" value="UDP-Glycosyltransferase/glycogen phosphorylase"/>
    <property type="match status" value="1"/>
</dbReference>
<dbReference type="PROSITE" id="PS00375">
    <property type="entry name" value="UDPGT"/>
    <property type="match status" value="1"/>
</dbReference>
<reference evidence="7 8" key="1">
    <citation type="journal article" date="2008" name="J. Exp. Bot.">
        <title>Multi-substrate flavonol O-glucosyltransferases from strawberry (Fragaria x ananassa) achene and receptacle.</title>
        <authorList>
            <person name="Griesser M."/>
            <person name="Vitzthum F."/>
            <person name="Fink B."/>
            <person name="Bellido M.L."/>
            <person name="Raasch C."/>
            <person name="Munoz-Blanco J."/>
            <person name="Schwab W."/>
        </authorList>
    </citation>
    <scope>NUCLEOTIDE SEQUENCE [MRNA]</scope>
    <scope>FUNCTION</scope>
    <scope>CATALYTIC ACTIVITY</scope>
    <scope>BIOPHYSICOCHEMICAL PROPERTIES</scope>
    <scope>TISSUE SPECIFICITY</scope>
    <scope>DEVELOPMENTAL STAGE</scope>
    <scope>INDUCTION</scope>
    <source>
        <strain evidence="5">cv. Elsanta</strain>
        <tissue evidence="5">Fruit</tissue>
    </source>
</reference>
<accession>Q2V6K0</accession>
<organism>
    <name type="scientific">Fragaria ananassa</name>
    <name type="common">Strawberry</name>
    <name type="synonym">Fragaria chiloensis x Fragaria virginiana</name>
    <dbReference type="NCBI Taxonomy" id="3747"/>
    <lineage>
        <taxon>Eukaryota</taxon>
        <taxon>Viridiplantae</taxon>
        <taxon>Streptophyta</taxon>
        <taxon>Embryophyta</taxon>
        <taxon>Tracheophyta</taxon>
        <taxon>Spermatophyta</taxon>
        <taxon>Magnoliopsida</taxon>
        <taxon>eudicotyledons</taxon>
        <taxon>Gunneridae</taxon>
        <taxon>Pentapetalae</taxon>
        <taxon>rosids</taxon>
        <taxon>fabids</taxon>
        <taxon>Rosales</taxon>
        <taxon>Rosaceae</taxon>
        <taxon>Rosoideae</taxon>
        <taxon>Potentilleae</taxon>
        <taxon>Fragariinae</taxon>
        <taxon>Fragaria</taxon>
    </lineage>
</organism>